<protein>
    <recommendedName>
        <fullName evidence="1">Diphthine synthase</fullName>
        <ecNumber evidence="1">2.1.1.98</ecNumber>
    </recommendedName>
    <alternativeName>
        <fullName evidence="1">Diphthamide biosynthesis methyltransferase</fullName>
    </alternativeName>
</protein>
<keyword id="KW-0489">Methyltransferase</keyword>
<keyword id="KW-0949">S-adenosyl-L-methionine</keyword>
<keyword id="KW-0808">Transferase</keyword>
<evidence type="ECO:0000255" key="1">
    <source>
        <dbReference type="HAMAP-Rule" id="MF_01084"/>
    </source>
</evidence>
<dbReference type="EC" id="2.1.1.98" evidence="1"/>
<dbReference type="EMBL" id="CP000504">
    <property type="protein sequence ID" value="ABL88447.1"/>
    <property type="molecule type" value="Genomic_DNA"/>
</dbReference>
<dbReference type="RefSeq" id="WP_011763022.1">
    <property type="nucleotide sequence ID" value="NC_008701.1"/>
</dbReference>
<dbReference type="SMR" id="A1RU15"/>
<dbReference type="STRING" id="384616.Pisl_1283"/>
<dbReference type="GeneID" id="4617910"/>
<dbReference type="KEGG" id="pis:Pisl_1283"/>
<dbReference type="eggNOG" id="arCOG04161">
    <property type="taxonomic scope" value="Archaea"/>
</dbReference>
<dbReference type="HOGENOM" id="CLU_066040_0_0_2"/>
<dbReference type="OrthoDB" id="39139at2157"/>
<dbReference type="UniPathway" id="UPA00559"/>
<dbReference type="Proteomes" id="UP000002595">
    <property type="component" value="Chromosome"/>
</dbReference>
<dbReference type="GO" id="GO:0004164">
    <property type="term" value="F:diphthine synthase activity"/>
    <property type="evidence" value="ECO:0007669"/>
    <property type="project" value="UniProtKB-UniRule"/>
</dbReference>
<dbReference type="GO" id="GO:0032259">
    <property type="term" value="P:methylation"/>
    <property type="evidence" value="ECO:0007669"/>
    <property type="project" value="UniProtKB-KW"/>
</dbReference>
<dbReference type="GO" id="GO:0017183">
    <property type="term" value="P:protein histidyl modification to diphthamide"/>
    <property type="evidence" value="ECO:0007669"/>
    <property type="project" value="UniProtKB-UniRule"/>
</dbReference>
<dbReference type="CDD" id="cd11647">
    <property type="entry name" value="DHP5_DphB"/>
    <property type="match status" value="1"/>
</dbReference>
<dbReference type="Gene3D" id="3.40.1010.10">
    <property type="entry name" value="Cobalt-precorrin-4 Transmethylase, Domain 1"/>
    <property type="match status" value="1"/>
</dbReference>
<dbReference type="Gene3D" id="3.30.950.10">
    <property type="entry name" value="Methyltransferase, Cobalt-precorrin-4 Transmethylase, Domain 2"/>
    <property type="match status" value="1"/>
</dbReference>
<dbReference type="HAMAP" id="MF_01084">
    <property type="entry name" value="Diphthine_synth"/>
    <property type="match status" value="1"/>
</dbReference>
<dbReference type="InterPro" id="IPR000878">
    <property type="entry name" value="4pyrrol_Mease"/>
</dbReference>
<dbReference type="InterPro" id="IPR035996">
    <property type="entry name" value="4pyrrol_Methylase_sf"/>
</dbReference>
<dbReference type="InterPro" id="IPR014777">
    <property type="entry name" value="4pyrrole_Mease_sub1"/>
</dbReference>
<dbReference type="InterPro" id="IPR014776">
    <property type="entry name" value="4pyrrole_Mease_sub2"/>
</dbReference>
<dbReference type="InterPro" id="IPR004551">
    <property type="entry name" value="Dphthn_synthase"/>
</dbReference>
<dbReference type="NCBIfam" id="TIGR00522">
    <property type="entry name" value="dph5"/>
    <property type="match status" value="1"/>
</dbReference>
<dbReference type="PANTHER" id="PTHR10882:SF0">
    <property type="entry name" value="DIPHTHINE METHYL ESTER SYNTHASE"/>
    <property type="match status" value="1"/>
</dbReference>
<dbReference type="PANTHER" id="PTHR10882">
    <property type="entry name" value="DIPHTHINE SYNTHASE"/>
    <property type="match status" value="1"/>
</dbReference>
<dbReference type="Pfam" id="PF00590">
    <property type="entry name" value="TP_methylase"/>
    <property type="match status" value="1"/>
</dbReference>
<dbReference type="PIRSF" id="PIRSF036432">
    <property type="entry name" value="Diphthine_synth"/>
    <property type="match status" value="1"/>
</dbReference>
<dbReference type="SUPFAM" id="SSF53790">
    <property type="entry name" value="Tetrapyrrole methylase"/>
    <property type="match status" value="1"/>
</dbReference>
<gene>
    <name evidence="1" type="primary">dphB</name>
    <name type="ordered locus">Pisl_1283</name>
</gene>
<organism>
    <name type="scientific">Pyrobaculum islandicum (strain DSM 4184 / JCM 9189 / GEO3)</name>
    <dbReference type="NCBI Taxonomy" id="384616"/>
    <lineage>
        <taxon>Archaea</taxon>
        <taxon>Thermoproteota</taxon>
        <taxon>Thermoprotei</taxon>
        <taxon>Thermoproteales</taxon>
        <taxon>Thermoproteaceae</taxon>
        <taxon>Pyrobaculum</taxon>
    </lineage>
</organism>
<accession>A1RU15</accession>
<comment type="function">
    <text evidence="1">S-adenosyl-L-methionine-dependent methyltransferase that catalyzes the trimethylation of the amino group of the modified target histidine residue in translation elongation factor 2 (EF-2), to form an intermediate called diphthine. The three successive methylation reactions represent the second step of diphthamide biosynthesis.</text>
</comment>
<comment type="catalytic activity">
    <reaction evidence="1">
        <text>2-[(3S)-amino-3-carboxypropyl]-L-histidyl-[translation elongation factor 2] + 3 S-adenosyl-L-methionine = diphthine-[translation elongation factor 2] + 3 S-adenosyl-L-homocysteine + 3 H(+)</text>
        <dbReference type="Rhea" id="RHEA:36415"/>
        <dbReference type="Rhea" id="RHEA-COMP:9749"/>
        <dbReference type="Rhea" id="RHEA-COMP:10172"/>
        <dbReference type="ChEBI" id="CHEBI:15378"/>
        <dbReference type="ChEBI" id="CHEBI:57856"/>
        <dbReference type="ChEBI" id="CHEBI:59789"/>
        <dbReference type="ChEBI" id="CHEBI:73995"/>
        <dbReference type="ChEBI" id="CHEBI:82696"/>
        <dbReference type="EC" id="2.1.1.98"/>
    </reaction>
</comment>
<comment type="pathway">
    <text evidence="1">Protein modification; peptidyl-diphthamide biosynthesis.</text>
</comment>
<comment type="subunit">
    <text evidence="1">Homodimer.</text>
</comment>
<comment type="similarity">
    <text evidence="1">Belongs to the diphthine synthase family.</text>
</comment>
<feature type="chain" id="PRO_1000064829" description="Diphthine synthase">
    <location>
        <begin position="1"/>
        <end position="249"/>
    </location>
</feature>
<feature type="binding site" evidence="1">
    <location>
        <position position="83"/>
    </location>
    <ligand>
        <name>S-adenosyl-L-methionine</name>
        <dbReference type="ChEBI" id="CHEBI:59789"/>
    </ligand>
</feature>
<feature type="binding site" evidence="1">
    <location>
        <position position="86"/>
    </location>
    <ligand>
        <name>S-adenosyl-L-methionine</name>
        <dbReference type="ChEBI" id="CHEBI:59789"/>
    </ligand>
</feature>
<feature type="binding site" evidence="1">
    <location>
        <begin position="111"/>
        <end position="112"/>
    </location>
    <ligand>
        <name>S-adenosyl-L-methionine</name>
        <dbReference type="ChEBI" id="CHEBI:59789"/>
    </ligand>
</feature>
<feature type="binding site" evidence="1">
    <location>
        <position position="163"/>
    </location>
    <ligand>
        <name>S-adenosyl-L-methionine</name>
        <dbReference type="ChEBI" id="CHEBI:59789"/>
    </ligand>
</feature>
<feature type="binding site" evidence="1">
    <location>
        <position position="205"/>
    </location>
    <ligand>
        <name>S-adenosyl-L-methionine</name>
        <dbReference type="ChEBI" id="CHEBI:59789"/>
    </ligand>
</feature>
<name>DPHB_PYRIL</name>
<proteinExistence type="inferred from homology"/>
<reference key="1">
    <citation type="submission" date="2006-12" db="EMBL/GenBank/DDBJ databases">
        <title>Complete sequence of Pyrobaculum islandicum DSM 4184.</title>
        <authorList>
            <person name="Copeland A."/>
            <person name="Lucas S."/>
            <person name="Lapidus A."/>
            <person name="Barry K."/>
            <person name="Detter J.C."/>
            <person name="Glavina del Rio T."/>
            <person name="Dalin E."/>
            <person name="Tice H."/>
            <person name="Pitluck S."/>
            <person name="Meincke L."/>
            <person name="Brettin T."/>
            <person name="Bruce D."/>
            <person name="Han C."/>
            <person name="Tapia R."/>
            <person name="Gilna P."/>
            <person name="Schmutz J."/>
            <person name="Larimer F."/>
            <person name="Land M."/>
            <person name="Hauser L."/>
            <person name="Kyrpides N."/>
            <person name="Mikhailova N."/>
            <person name="Cozen A.E."/>
            <person name="Fitz-Gibbon S.T."/>
            <person name="House C.H."/>
            <person name="Saltikov C."/>
            <person name="Lowe T."/>
            <person name="Richardson P."/>
        </authorList>
    </citation>
    <scope>NUCLEOTIDE SEQUENCE [LARGE SCALE GENOMIC DNA]</scope>
    <source>
        <strain>DSM 4184 / JCM 9189 / GEO3</strain>
    </source>
</reference>
<sequence>MFYIVGIGPGPGYITERAIQILQEVECIFYEDYTGPLDVATLRRYARVEPVKLARRDLEDESGRKIFECLQEGKKAALVTAGDPMLATSHAALITLAKAKGYSVEVVPGVSIICAAFSASCLSIYKLGGVATVTYPRGGVYSVRPYELVEQNLARGLHTLLLLDIRDDGVFMSPRDAAEVLLTLEGRERRGVFTRDRRVVVVSKLGWGGSVLYAPLGEIVQSEMEGPAVFIVPAGLNPVERECIKTFSK</sequence>